<gene>
    <name type="primary">RPB2</name>
    <name type="ordered locus">ECU10_0250</name>
</gene>
<accession>Q8SR75</accession>
<name>RPB2_ENCCU</name>
<sequence length="1141" mass="127881">MESAFTKEHSWSIISSFFEQKGLVRQQLDSFDQFVKTKMQEVINESPVIIVQSAPTAGIETQKRIAVRFGQIYVSKPPVYTESDGRTITVFPNEARIRDLTYASPLFIDVTKETLSELGVVDKHKYSRVPFGSLPVMLRSSYCVLYGLGDKDLIDLGECPYDQGGYFIVNGSEKVIVAQERMASNTVYVFKKAQPATYTHYAEIRSVPEKSSRNPSTLSMKLCRSPGVIRVSLPLVKQDVPLFVLYRALGFLSDKEIIDHILYEDDEEMFELLKESIEEGTVVQDQNVALDYIGKRSAPIGTPQEKRIVMAKDLLAKEVLPHIGTQEFCETKKAYFIGYIVQRLLLVALGRRNPDDRDHYGKKRMDLSGPLLASLFRTLFKKLCVDTTRHMQKCIENGREFNIALGLKASIITQGFRYALATGNWGDQAKAMQTRAGVAQVLNRYNFVSTLSHLRRVNTPIEKEGKLAAPRQLHNTHWGMVCPAETPEGQACGLVKNLSLMAYISVGSSSGPLVEFLEECGVESLEEISTSQLDAATKIFVNGVWVGIHSDPVGLIKSLKLLRRSLEMDKEVSIVRDIREKEIRVQSDAGRPCRPLLVVKDNKLVITAEDIRKLKRGEIKWDNLVTSGFIEFLDVEEEEMSMIAMNTKILADESRNSSDVSVSYTHCEIHPALILGICASTIPFPDHNQSPRNTYQSAMGKQAMGIYATNFLLRMDTLSNILFYPQKPLVTTKSMEYLRFKELPSGQNALVAIACYSGYNQEDSIIMNQSAIDRGLFRSFFYRTYTDQESMSRPGVNEEFCKPSRGAVLRMKNLNYNKLDDDGLISPGTRVTGDDVLIGKITPILDPERSTKEAPVYVYKDSSTAMRRTETGIVDTVIVTNKDGYKFSKVKVRSGRIPQMGDKFASRHAQKGTIGITLRQEDMPFTSEGIVPDIIINPHAIPSRMTIGHLIECLLGKVSAMSGEEGDATPFSGVTVDGISSRLKSYGFQQRGLEVMYNGMTGRKLRAQMFFGPTYYQRLKHMVDDKIHARARGPLQILTRQPVEGRSRDGGLRFGEMERDCIISHGASAFLKERLMDVSDAYSCYVCDFCGLLAMGGSKVNECKGCNNTTNVSMVEIPYAFKLLIQELMGMNIAPRIRFEE</sequence>
<organism>
    <name type="scientific">Encephalitozoon cuniculi (strain GB-M1)</name>
    <name type="common">Microsporidian parasite</name>
    <dbReference type="NCBI Taxonomy" id="284813"/>
    <lineage>
        <taxon>Eukaryota</taxon>
        <taxon>Fungi</taxon>
        <taxon>Fungi incertae sedis</taxon>
        <taxon>Microsporidia</taxon>
        <taxon>Unikaryonidae</taxon>
        <taxon>Encephalitozoon</taxon>
    </lineage>
</organism>
<keyword id="KW-0240">DNA-directed RNA polymerase</keyword>
<keyword id="KW-0460">Magnesium</keyword>
<keyword id="KW-0479">Metal-binding</keyword>
<keyword id="KW-0548">Nucleotidyltransferase</keyword>
<keyword id="KW-0539">Nucleus</keyword>
<keyword id="KW-1185">Reference proteome</keyword>
<keyword id="KW-0804">Transcription</keyword>
<keyword id="KW-0808">Transferase</keyword>
<keyword id="KW-0862">Zinc</keyword>
<keyword id="KW-0863">Zinc-finger</keyword>
<reference key="1">
    <citation type="journal article" date="2001" name="Nature">
        <title>Genome sequence and gene compaction of the eukaryote parasite Encephalitozoon cuniculi.</title>
        <authorList>
            <person name="Katinka M.D."/>
            <person name="Duprat S."/>
            <person name="Cornillot E."/>
            <person name="Metenier G."/>
            <person name="Thomarat F."/>
            <person name="Prensier G."/>
            <person name="Barbe V."/>
            <person name="Peyretaillade E."/>
            <person name="Brottier P."/>
            <person name="Wincker P."/>
            <person name="Delbac F."/>
            <person name="El Alaoui H."/>
            <person name="Peyret P."/>
            <person name="Saurin W."/>
            <person name="Gouy M."/>
            <person name="Weissenbach J."/>
            <person name="Vivares C.P."/>
        </authorList>
    </citation>
    <scope>NUCLEOTIDE SEQUENCE [LARGE SCALE GENOMIC DNA]</scope>
    <source>
        <strain>GB-M1</strain>
    </source>
</reference>
<feature type="chain" id="PRO_0000048087" description="DNA-directed RNA polymerase II subunit RPB2">
    <location>
        <begin position="1"/>
        <end position="1141"/>
    </location>
</feature>
<feature type="zinc finger region" description="C4-type">
    <location>
        <begin position="1087"/>
        <end position="1106"/>
    </location>
</feature>
<feature type="binding site" evidence="1">
    <location>
        <position position="763"/>
    </location>
    <ligand>
        <name>Mg(2+)</name>
        <dbReference type="ChEBI" id="CHEBI:18420"/>
        <note>ligand shared with RPB1</note>
    </ligand>
</feature>
<feature type="binding site" evidence="1">
    <location>
        <position position="1087"/>
    </location>
    <ligand>
        <name>Zn(2+)</name>
        <dbReference type="ChEBI" id="CHEBI:29105"/>
    </ligand>
</feature>
<feature type="binding site" evidence="1">
    <location>
        <position position="1090"/>
    </location>
    <ligand>
        <name>Zn(2+)</name>
        <dbReference type="ChEBI" id="CHEBI:29105"/>
    </ligand>
</feature>
<feature type="binding site" evidence="1">
    <location>
        <position position="1103"/>
    </location>
    <ligand>
        <name>Zn(2+)</name>
        <dbReference type="ChEBI" id="CHEBI:29105"/>
    </ligand>
</feature>
<feature type="binding site" evidence="1">
    <location>
        <position position="1106"/>
    </location>
    <ligand>
        <name>Zn(2+)</name>
        <dbReference type="ChEBI" id="CHEBI:29105"/>
    </ligand>
</feature>
<evidence type="ECO:0000250" key="1"/>
<evidence type="ECO:0000305" key="2"/>
<protein>
    <recommendedName>
        <fullName>DNA-directed RNA polymerase II subunit RPB2</fullName>
        <shortName>RNA polymerase II subunit 2</shortName>
        <shortName>RNA polymerase II subunit B2</shortName>
        <ecNumber>2.7.7.6</ecNumber>
    </recommendedName>
</protein>
<dbReference type="EC" id="2.7.7.6"/>
<dbReference type="EMBL" id="AL590449">
    <property type="protein sequence ID" value="CAD25744.1"/>
    <property type="molecule type" value="Genomic_DNA"/>
</dbReference>
<dbReference type="RefSeq" id="NP_586140.1">
    <property type="nucleotide sequence ID" value="NM_001041973.1"/>
</dbReference>
<dbReference type="SMR" id="Q8SR75"/>
<dbReference type="FunCoup" id="Q8SR75">
    <property type="interactions" value="190"/>
</dbReference>
<dbReference type="STRING" id="284813.Q8SR75"/>
<dbReference type="GeneID" id="859788"/>
<dbReference type="KEGG" id="ecu:ECU10_0250"/>
<dbReference type="VEuPathDB" id="MicrosporidiaDB:ECU10_0250"/>
<dbReference type="HOGENOM" id="CLU_000524_5_2_1"/>
<dbReference type="InParanoid" id="Q8SR75"/>
<dbReference type="OMA" id="LQAQVYF"/>
<dbReference type="OrthoDB" id="10248617at2759"/>
<dbReference type="Proteomes" id="UP000000819">
    <property type="component" value="Chromosome X"/>
</dbReference>
<dbReference type="GO" id="GO:0000428">
    <property type="term" value="C:DNA-directed RNA polymerase complex"/>
    <property type="evidence" value="ECO:0007669"/>
    <property type="project" value="UniProtKB-KW"/>
</dbReference>
<dbReference type="GO" id="GO:0005739">
    <property type="term" value="C:mitochondrion"/>
    <property type="evidence" value="ECO:0007669"/>
    <property type="project" value="GOC"/>
</dbReference>
<dbReference type="GO" id="GO:0005634">
    <property type="term" value="C:nucleus"/>
    <property type="evidence" value="ECO:0007669"/>
    <property type="project" value="UniProtKB-SubCell"/>
</dbReference>
<dbReference type="GO" id="GO:0003677">
    <property type="term" value="F:DNA binding"/>
    <property type="evidence" value="ECO:0007669"/>
    <property type="project" value="InterPro"/>
</dbReference>
<dbReference type="GO" id="GO:0003899">
    <property type="term" value="F:DNA-directed RNA polymerase activity"/>
    <property type="evidence" value="ECO:0007669"/>
    <property type="project" value="UniProtKB-EC"/>
</dbReference>
<dbReference type="GO" id="GO:0032549">
    <property type="term" value="F:ribonucleoside binding"/>
    <property type="evidence" value="ECO:0007669"/>
    <property type="project" value="InterPro"/>
</dbReference>
<dbReference type="GO" id="GO:0008270">
    <property type="term" value="F:zinc ion binding"/>
    <property type="evidence" value="ECO:0007669"/>
    <property type="project" value="UniProtKB-KW"/>
</dbReference>
<dbReference type="GO" id="GO:0006351">
    <property type="term" value="P:DNA-templated transcription"/>
    <property type="evidence" value="ECO:0007669"/>
    <property type="project" value="InterPro"/>
</dbReference>
<dbReference type="CDD" id="cd00653">
    <property type="entry name" value="RNA_pol_B_RPB2"/>
    <property type="match status" value="1"/>
</dbReference>
<dbReference type="FunFam" id="2.40.270.10:FF:000006">
    <property type="entry name" value="DNA-directed RNA polymerase subunit beta"/>
    <property type="match status" value="1"/>
</dbReference>
<dbReference type="FunFam" id="2.40.270.10:FF:000011">
    <property type="entry name" value="DNA-directed RNA polymerase subunit beta"/>
    <property type="match status" value="1"/>
</dbReference>
<dbReference type="FunFam" id="2.40.50.150:FF:000002">
    <property type="entry name" value="DNA-directed RNA polymerase subunit beta"/>
    <property type="match status" value="1"/>
</dbReference>
<dbReference type="FunFam" id="3.90.1070.20:FF:000002">
    <property type="entry name" value="DNA-directed RNA polymerase subunit beta"/>
    <property type="match status" value="1"/>
</dbReference>
<dbReference type="FunFam" id="3.90.1800.10:FF:000002">
    <property type="entry name" value="DNA-directed RNA polymerase subunit beta"/>
    <property type="match status" value="1"/>
</dbReference>
<dbReference type="Gene3D" id="2.40.50.150">
    <property type="match status" value="1"/>
</dbReference>
<dbReference type="Gene3D" id="3.90.1070.20">
    <property type="match status" value="1"/>
</dbReference>
<dbReference type="Gene3D" id="2.40.270.10">
    <property type="entry name" value="DNA-directed RNA polymerase, subunit 2, domain 6"/>
    <property type="match status" value="1"/>
</dbReference>
<dbReference type="Gene3D" id="3.90.1800.10">
    <property type="entry name" value="RNA polymerase alpha subunit dimerisation domain"/>
    <property type="match status" value="1"/>
</dbReference>
<dbReference type="Gene3D" id="3.90.1110.10">
    <property type="entry name" value="RNA polymerase Rpb2, domain 2"/>
    <property type="match status" value="1"/>
</dbReference>
<dbReference type="InterPro" id="IPR015712">
    <property type="entry name" value="DNA-dir_RNA_pol_su2"/>
</dbReference>
<dbReference type="InterPro" id="IPR007120">
    <property type="entry name" value="DNA-dir_RNAP_su2_dom"/>
</dbReference>
<dbReference type="InterPro" id="IPR037033">
    <property type="entry name" value="DNA-dir_RNAP_su2_hyb_sf"/>
</dbReference>
<dbReference type="InterPro" id="IPR007121">
    <property type="entry name" value="RNA_pol_bsu_CS"/>
</dbReference>
<dbReference type="InterPro" id="IPR007644">
    <property type="entry name" value="RNA_pol_bsu_protrusion"/>
</dbReference>
<dbReference type="InterPro" id="IPR007642">
    <property type="entry name" value="RNA_pol_Rpb2_2"/>
</dbReference>
<dbReference type="InterPro" id="IPR037034">
    <property type="entry name" value="RNA_pol_Rpb2_2_sf"/>
</dbReference>
<dbReference type="InterPro" id="IPR007645">
    <property type="entry name" value="RNA_pol_Rpb2_3"/>
</dbReference>
<dbReference type="InterPro" id="IPR007646">
    <property type="entry name" value="RNA_pol_Rpb2_4"/>
</dbReference>
<dbReference type="InterPro" id="IPR007647">
    <property type="entry name" value="RNA_pol_Rpb2_5"/>
</dbReference>
<dbReference type="InterPro" id="IPR007641">
    <property type="entry name" value="RNA_pol_Rpb2_7"/>
</dbReference>
<dbReference type="InterPro" id="IPR014724">
    <property type="entry name" value="RNA_pol_RPB2_OB-fold"/>
</dbReference>
<dbReference type="NCBIfam" id="NF007175">
    <property type="entry name" value="PRK09606.1"/>
    <property type="match status" value="1"/>
</dbReference>
<dbReference type="PANTHER" id="PTHR20856">
    <property type="entry name" value="DNA-DIRECTED RNA POLYMERASE I SUBUNIT 2"/>
    <property type="match status" value="1"/>
</dbReference>
<dbReference type="Pfam" id="PF04563">
    <property type="entry name" value="RNA_pol_Rpb2_1"/>
    <property type="match status" value="1"/>
</dbReference>
<dbReference type="Pfam" id="PF04561">
    <property type="entry name" value="RNA_pol_Rpb2_2"/>
    <property type="match status" value="1"/>
</dbReference>
<dbReference type="Pfam" id="PF04565">
    <property type="entry name" value="RNA_pol_Rpb2_3"/>
    <property type="match status" value="1"/>
</dbReference>
<dbReference type="Pfam" id="PF04566">
    <property type="entry name" value="RNA_pol_Rpb2_4"/>
    <property type="match status" value="1"/>
</dbReference>
<dbReference type="Pfam" id="PF04567">
    <property type="entry name" value="RNA_pol_Rpb2_5"/>
    <property type="match status" value="1"/>
</dbReference>
<dbReference type="Pfam" id="PF00562">
    <property type="entry name" value="RNA_pol_Rpb2_6"/>
    <property type="match status" value="1"/>
</dbReference>
<dbReference type="Pfam" id="PF04560">
    <property type="entry name" value="RNA_pol_Rpb2_7"/>
    <property type="match status" value="1"/>
</dbReference>
<dbReference type="SUPFAM" id="SSF64484">
    <property type="entry name" value="beta and beta-prime subunits of DNA dependent RNA-polymerase"/>
    <property type="match status" value="1"/>
</dbReference>
<dbReference type="PROSITE" id="PS01166">
    <property type="entry name" value="RNA_POL_BETA"/>
    <property type="match status" value="1"/>
</dbReference>
<comment type="function">
    <text evidence="1">DNA-dependent RNA polymerase catalyzes the transcription of DNA into RNA using the four ribonucleoside triphosphates as substrates. Second largest component of RNA polymerase II which synthesizes mRNA precursors and many functional non-coding RNAs. Proposed to contribute to the polymerase catalytic activity and forms the polymerase active center together with the largest subunit. Pol II is the central component of the basal RNA polymerase II transcription machinery. It is composed of mobile elements that move relative to each other. RPB2 is part of the core element with the central large cleft, the clamp element that moves to open and close the cleft and the jaws that are thought to grab the incoming DNA template (By similarity).</text>
</comment>
<comment type="catalytic activity">
    <reaction>
        <text>RNA(n) + a ribonucleoside 5'-triphosphate = RNA(n+1) + diphosphate</text>
        <dbReference type="Rhea" id="RHEA:21248"/>
        <dbReference type="Rhea" id="RHEA-COMP:14527"/>
        <dbReference type="Rhea" id="RHEA-COMP:17342"/>
        <dbReference type="ChEBI" id="CHEBI:33019"/>
        <dbReference type="ChEBI" id="CHEBI:61557"/>
        <dbReference type="ChEBI" id="CHEBI:140395"/>
        <dbReference type="EC" id="2.7.7.6"/>
    </reaction>
</comment>
<comment type="subunit">
    <text evidence="1">Component of the RNA polymerase II (Pol II) complex consisting of 12 subunits.</text>
</comment>
<comment type="subcellular location">
    <subcellularLocation>
        <location evidence="1">Nucleus</location>
    </subcellularLocation>
</comment>
<comment type="miscellaneous">
    <text evidence="1">The binding of ribonucleoside triphosphate to the RNA polymerase II transcribing complex probably involves a two-step mechanism. The initial binding seems to occur at the entry (E) site and involves a magnesium ion coordinated by three conserved aspartate residues of the two largest RNA Pol II subunits (By similarity).</text>
</comment>
<comment type="similarity">
    <text evidence="2">Belongs to the RNA polymerase beta chain family.</text>
</comment>
<proteinExistence type="inferred from homology"/>